<name>TRHO_XANAC</name>
<gene>
    <name evidence="1" type="primary">trhO</name>
    <name type="ordered locus">XAC2109</name>
</gene>
<proteinExistence type="inferred from homology"/>
<evidence type="ECO:0000255" key="1">
    <source>
        <dbReference type="HAMAP-Rule" id="MF_00469"/>
    </source>
</evidence>
<reference key="1">
    <citation type="journal article" date="2002" name="Nature">
        <title>Comparison of the genomes of two Xanthomonas pathogens with differing host specificities.</title>
        <authorList>
            <person name="da Silva A.C.R."/>
            <person name="Ferro J.A."/>
            <person name="Reinach F.C."/>
            <person name="Farah C.S."/>
            <person name="Furlan L.R."/>
            <person name="Quaggio R.B."/>
            <person name="Monteiro-Vitorello C.B."/>
            <person name="Van Sluys M.A."/>
            <person name="Almeida N.F. Jr."/>
            <person name="Alves L.M.C."/>
            <person name="do Amaral A.M."/>
            <person name="Bertolini M.C."/>
            <person name="Camargo L.E.A."/>
            <person name="Camarotte G."/>
            <person name="Cannavan F."/>
            <person name="Cardozo J."/>
            <person name="Chambergo F."/>
            <person name="Ciapina L.P."/>
            <person name="Cicarelli R.M.B."/>
            <person name="Coutinho L.L."/>
            <person name="Cursino-Santos J.R."/>
            <person name="El-Dorry H."/>
            <person name="Faria J.B."/>
            <person name="Ferreira A.J.S."/>
            <person name="Ferreira R.C.C."/>
            <person name="Ferro M.I.T."/>
            <person name="Formighieri E.F."/>
            <person name="Franco M.C."/>
            <person name="Greggio C.C."/>
            <person name="Gruber A."/>
            <person name="Katsuyama A.M."/>
            <person name="Kishi L.T."/>
            <person name="Leite R.P."/>
            <person name="Lemos E.G.M."/>
            <person name="Lemos M.V.F."/>
            <person name="Locali E.C."/>
            <person name="Machado M.A."/>
            <person name="Madeira A.M.B.N."/>
            <person name="Martinez-Rossi N.M."/>
            <person name="Martins E.C."/>
            <person name="Meidanis J."/>
            <person name="Menck C.F.M."/>
            <person name="Miyaki C.Y."/>
            <person name="Moon D.H."/>
            <person name="Moreira L.M."/>
            <person name="Novo M.T.M."/>
            <person name="Okura V.K."/>
            <person name="Oliveira M.C."/>
            <person name="Oliveira V.R."/>
            <person name="Pereira H.A."/>
            <person name="Rossi A."/>
            <person name="Sena J.A.D."/>
            <person name="Silva C."/>
            <person name="de Souza R.F."/>
            <person name="Spinola L.A.F."/>
            <person name="Takita M.A."/>
            <person name="Tamura R.E."/>
            <person name="Teixeira E.C."/>
            <person name="Tezza R.I.D."/>
            <person name="Trindade dos Santos M."/>
            <person name="Truffi D."/>
            <person name="Tsai S.M."/>
            <person name="White F.F."/>
            <person name="Setubal J.C."/>
            <person name="Kitajima J.P."/>
        </authorList>
    </citation>
    <scope>NUCLEOTIDE SEQUENCE [LARGE SCALE GENOMIC DNA]</scope>
    <source>
        <strain>306</strain>
    </source>
</reference>
<protein>
    <recommendedName>
        <fullName evidence="1">tRNA uridine(34) hydroxylase</fullName>
        <ecNumber evidence="1">1.14.-.-</ecNumber>
    </recommendedName>
    <alternativeName>
        <fullName evidence="1">tRNA hydroxylation protein O</fullName>
    </alternativeName>
</protein>
<dbReference type="EC" id="1.14.-.-" evidence="1"/>
<dbReference type="EMBL" id="AE008923">
    <property type="protein sequence ID" value="AAM36962.1"/>
    <property type="molecule type" value="Genomic_DNA"/>
</dbReference>
<dbReference type="RefSeq" id="WP_011051338.1">
    <property type="nucleotide sequence ID" value="NC_003919.1"/>
</dbReference>
<dbReference type="SMR" id="Q8PKR0"/>
<dbReference type="KEGG" id="xac:XAC2109"/>
<dbReference type="eggNOG" id="COG1054">
    <property type="taxonomic scope" value="Bacteria"/>
</dbReference>
<dbReference type="HOGENOM" id="CLU_038878_0_1_6"/>
<dbReference type="Proteomes" id="UP000000576">
    <property type="component" value="Chromosome"/>
</dbReference>
<dbReference type="GO" id="GO:0016705">
    <property type="term" value="F:oxidoreductase activity, acting on paired donors, with incorporation or reduction of molecular oxygen"/>
    <property type="evidence" value="ECO:0007669"/>
    <property type="project" value="UniProtKB-UniRule"/>
</dbReference>
<dbReference type="GO" id="GO:0006400">
    <property type="term" value="P:tRNA modification"/>
    <property type="evidence" value="ECO:0007669"/>
    <property type="project" value="UniProtKB-UniRule"/>
</dbReference>
<dbReference type="Gene3D" id="3.30.70.100">
    <property type="match status" value="1"/>
</dbReference>
<dbReference type="Gene3D" id="3.40.250.10">
    <property type="entry name" value="Rhodanese-like domain"/>
    <property type="match status" value="1"/>
</dbReference>
<dbReference type="HAMAP" id="MF_00469">
    <property type="entry name" value="TrhO"/>
    <property type="match status" value="1"/>
</dbReference>
<dbReference type="InterPro" id="IPR001763">
    <property type="entry name" value="Rhodanese-like_dom"/>
</dbReference>
<dbReference type="InterPro" id="IPR036873">
    <property type="entry name" value="Rhodanese-like_dom_sf"/>
</dbReference>
<dbReference type="InterPro" id="IPR020936">
    <property type="entry name" value="TrhO"/>
</dbReference>
<dbReference type="InterPro" id="IPR040503">
    <property type="entry name" value="TRHO_N"/>
</dbReference>
<dbReference type="NCBIfam" id="NF003703">
    <property type="entry name" value="PRK05320.1"/>
    <property type="match status" value="1"/>
</dbReference>
<dbReference type="PANTHER" id="PTHR43268:SF3">
    <property type="entry name" value="RHODANESE-LIKE DOMAIN-CONTAINING PROTEIN 7-RELATED"/>
    <property type="match status" value="1"/>
</dbReference>
<dbReference type="PANTHER" id="PTHR43268">
    <property type="entry name" value="THIOSULFATE SULFURTRANSFERASE/RHODANESE-LIKE DOMAIN-CONTAINING PROTEIN 2"/>
    <property type="match status" value="1"/>
</dbReference>
<dbReference type="Pfam" id="PF00581">
    <property type="entry name" value="Rhodanese"/>
    <property type="match status" value="1"/>
</dbReference>
<dbReference type="Pfam" id="PF17773">
    <property type="entry name" value="UPF0176_N"/>
    <property type="match status" value="1"/>
</dbReference>
<dbReference type="SMART" id="SM00450">
    <property type="entry name" value="RHOD"/>
    <property type="match status" value="1"/>
</dbReference>
<dbReference type="SUPFAM" id="SSF52821">
    <property type="entry name" value="Rhodanese/Cell cycle control phosphatase"/>
    <property type="match status" value="1"/>
</dbReference>
<dbReference type="PROSITE" id="PS50206">
    <property type="entry name" value="RHODANESE_3"/>
    <property type="match status" value="1"/>
</dbReference>
<organism>
    <name type="scientific">Xanthomonas axonopodis pv. citri (strain 306)</name>
    <dbReference type="NCBI Taxonomy" id="190486"/>
    <lineage>
        <taxon>Bacteria</taxon>
        <taxon>Pseudomonadati</taxon>
        <taxon>Pseudomonadota</taxon>
        <taxon>Gammaproteobacteria</taxon>
        <taxon>Lysobacterales</taxon>
        <taxon>Lysobacteraceae</taxon>
        <taxon>Xanthomonas</taxon>
    </lineage>
</organism>
<accession>Q8PKR0</accession>
<comment type="function">
    <text evidence="1">Catalyzes oxygen-dependent 5-hydroxyuridine (ho5U) modification at position 34 in tRNAs.</text>
</comment>
<comment type="catalytic activity">
    <reaction evidence="1">
        <text>uridine(34) in tRNA + AH2 + O2 = 5-hydroxyuridine(34) in tRNA + A + H2O</text>
        <dbReference type="Rhea" id="RHEA:64224"/>
        <dbReference type="Rhea" id="RHEA-COMP:11727"/>
        <dbReference type="Rhea" id="RHEA-COMP:13381"/>
        <dbReference type="ChEBI" id="CHEBI:13193"/>
        <dbReference type="ChEBI" id="CHEBI:15377"/>
        <dbReference type="ChEBI" id="CHEBI:15379"/>
        <dbReference type="ChEBI" id="CHEBI:17499"/>
        <dbReference type="ChEBI" id="CHEBI:65315"/>
        <dbReference type="ChEBI" id="CHEBI:136877"/>
    </reaction>
</comment>
<comment type="similarity">
    <text evidence="1">Belongs to the TrhO family.</text>
</comment>
<sequence>MMTNTAAYQFVTIRDPQTLAASVLAQAEQHALKGSVLVAEEGINLFLAGAAEQIGAFYTWLQADTRFAQMRIKYSESKHQPFARLKVKIKREIISFRRDDASPLQGRAPSVTPAVLRKWLRNGQDDRGRPLVLLDTRNAQEVRYGTFQGALTLPIDKFTDLPGALEPHRAALADATVVSFCTGGIRCEKAALWMQADGMDNVLQLEGGILGYFEEVGGEGYDGRCFVFDERVALDPELNPLVDADRTA</sequence>
<keyword id="KW-0560">Oxidoreductase</keyword>
<keyword id="KW-0819">tRNA processing</keyword>
<feature type="chain" id="PRO_0000161539" description="tRNA uridine(34) hydroxylase">
    <location>
        <begin position="1"/>
        <end position="248"/>
    </location>
</feature>
<feature type="domain" description="Rhodanese" evidence="1">
    <location>
        <begin position="127"/>
        <end position="221"/>
    </location>
</feature>
<feature type="active site" description="Cysteine persulfide intermediate" evidence="1">
    <location>
        <position position="181"/>
    </location>
</feature>